<sequence>MVPGSEGPARAGGLVADVVFVIEGTANLGPYFEELRKHYLLPAIEYFNGGPPAETDFGGDYGGTQYSLVVFNTVDCAPESYVQCHAPTSSAYEFVTWLDGIKFMGGGGESCSLIAEGLSTALQLFDDFKKMREQIGQTHRVCLLICNSPPYLLPAVESTTYSGCTTESLVQKIGERGIHFSIVSPRKLPALRLLFEKAAPPALLEPLQQPADVSQDPRHMVLVRGLVLPVGGSSTSGSLQTKQAVPLPPAPASAATLSAAPPQALPPVPPQYQVPGNLSAAQVAAQNAVEAAKSQKAGLGPRFSPINPLQQAAPGVGPPFSQAPAPPLAPVPPGAPKPPPASQPSLVSTVAPGPVLAAPAQPGAPSLAGTVTPGGVNGPSAAQLGGPALGGQQSVSNKLLAWSGVLEWQEKPKPASVDANTKLTRSLPCQVYVNHGENLKTEQWPQKLIMQLIPQQLLTTLGPLFRNSRMVQFHFTNKDLESLKGLYRIMGNGFAGCVHFPHTAPCEVRVLMLLYSSKKKIFMGLIPYDQSGFVNGIRQVITNHKQVQQQKLEQQRGMGAQQAPPVLGPILEEQARPPQNLLQLRAPQPQPQGAVGASAATGQPQPQGATQAPTGAPQGPPGAAPGPPPSGPILRPQNPGANPQLRSLLLNPAPPQTGVPPPQASLHHLQPPGAPTLLPPHQSMGQPQLGPQLLHPPPAQSWPTQLPQRAPLPGQMLLSGGPRGPVPQPGLQPSVMEDDILMDLI</sequence>
<proteinExistence type="evidence at protein level"/>
<feature type="chain" id="PRO_0000304953" description="Mediator of RNA polymerase II transcription subunit 25">
    <location>
        <begin position="1"/>
        <end position="745"/>
    </location>
</feature>
<feature type="region of interest" description="Interaction with the Mediator complex" evidence="1">
    <location>
        <begin position="1"/>
        <end position="226"/>
    </location>
</feature>
<feature type="region of interest" description="Disordered" evidence="2">
    <location>
        <begin position="233"/>
        <end position="266"/>
    </location>
</feature>
<feature type="region of interest" description="Disordered" evidence="2">
    <location>
        <begin position="299"/>
        <end position="374"/>
    </location>
</feature>
<feature type="region of interest" description="Interaction with VP16" evidence="1">
    <location>
        <begin position="389"/>
        <end position="543"/>
    </location>
</feature>
<feature type="region of interest" description="Interaction with CREBBP" evidence="1">
    <location>
        <begin position="395"/>
        <end position="545"/>
    </location>
</feature>
<feature type="region of interest" description="Interaction with RARA" evidence="1">
    <location>
        <begin position="563"/>
        <end position="652"/>
    </location>
</feature>
<feature type="region of interest" description="Disordered" evidence="2">
    <location>
        <begin position="584"/>
        <end position="738"/>
    </location>
</feature>
<feature type="region of interest" description="Interaction with RARA" evidence="1">
    <location>
        <begin position="639"/>
        <end position="705"/>
    </location>
</feature>
<feature type="short sequence motif" description="LXXLL motif">
    <location>
        <begin position="645"/>
        <end position="649"/>
    </location>
</feature>
<feature type="compositionally biased region" description="Polar residues" evidence="2">
    <location>
        <begin position="233"/>
        <end position="243"/>
    </location>
</feature>
<feature type="compositionally biased region" description="Low complexity" evidence="2">
    <location>
        <begin position="252"/>
        <end position="262"/>
    </location>
</feature>
<feature type="compositionally biased region" description="Pro residues" evidence="2">
    <location>
        <begin position="324"/>
        <end position="342"/>
    </location>
</feature>
<feature type="compositionally biased region" description="Low complexity" evidence="2">
    <location>
        <begin position="596"/>
        <end position="617"/>
    </location>
</feature>
<feature type="compositionally biased region" description="Pro residues" evidence="2">
    <location>
        <begin position="618"/>
        <end position="631"/>
    </location>
</feature>
<feature type="compositionally biased region" description="Pro residues" evidence="2">
    <location>
        <begin position="652"/>
        <end position="663"/>
    </location>
</feature>
<feature type="modified residue" description="Asymmetric dimethylarginine" evidence="7">
    <location>
        <position position="723"/>
    </location>
</feature>
<feature type="splice variant" id="VSP_028147" description="In isoform 2." evidence="4">
    <location>
        <begin position="1"/>
        <end position="103"/>
    </location>
</feature>
<feature type="splice variant" id="VSP_028148" description="In isoform 3." evidence="5">
    <original>K</original>
    <variation>KPVLGAEPYPDPARMSNSLSLLPANGIPRKLSSGIVKCRCLLRTSGRNPHLEFWEAPRPSLLHIRDGAYEDSTTFGQM</variation>
    <location>
        <position position="102"/>
    </location>
</feature>
<feature type="splice variant" id="VSP_028149" description="In isoform 4." evidence="5">
    <location>
        <begin position="103"/>
        <end position="745"/>
    </location>
</feature>
<feature type="splice variant" id="VSP_028150" description="In isoform 2." evidence="4">
    <location>
        <begin position="558"/>
        <end position="581"/>
    </location>
</feature>
<reference key="1">
    <citation type="journal article" date="2005" name="Science">
        <title>The transcriptional landscape of the mammalian genome.</title>
        <authorList>
            <person name="Carninci P."/>
            <person name="Kasukawa T."/>
            <person name="Katayama S."/>
            <person name="Gough J."/>
            <person name="Frith M.C."/>
            <person name="Maeda N."/>
            <person name="Oyama R."/>
            <person name="Ravasi T."/>
            <person name="Lenhard B."/>
            <person name="Wells C."/>
            <person name="Kodzius R."/>
            <person name="Shimokawa K."/>
            <person name="Bajic V.B."/>
            <person name="Brenner S.E."/>
            <person name="Batalov S."/>
            <person name="Forrest A.R."/>
            <person name="Zavolan M."/>
            <person name="Davis M.J."/>
            <person name="Wilming L.G."/>
            <person name="Aidinis V."/>
            <person name="Allen J.E."/>
            <person name="Ambesi-Impiombato A."/>
            <person name="Apweiler R."/>
            <person name="Aturaliya R.N."/>
            <person name="Bailey T.L."/>
            <person name="Bansal M."/>
            <person name="Baxter L."/>
            <person name="Beisel K.W."/>
            <person name="Bersano T."/>
            <person name="Bono H."/>
            <person name="Chalk A.M."/>
            <person name="Chiu K.P."/>
            <person name="Choudhary V."/>
            <person name="Christoffels A."/>
            <person name="Clutterbuck D.R."/>
            <person name="Crowe M.L."/>
            <person name="Dalla E."/>
            <person name="Dalrymple B.P."/>
            <person name="de Bono B."/>
            <person name="Della Gatta G."/>
            <person name="di Bernardo D."/>
            <person name="Down T."/>
            <person name="Engstrom P."/>
            <person name="Fagiolini M."/>
            <person name="Faulkner G."/>
            <person name="Fletcher C.F."/>
            <person name="Fukushima T."/>
            <person name="Furuno M."/>
            <person name="Futaki S."/>
            <person name="Gariboldi M."/>
            <person name="Georgii-Hemming P."/>
            <person name="Gingeras T.R."/>
            <person name="Gojobori T."/>
            <person name="Green R.E."/>
            <person name="Gustincich S."/>
            <person name="Harbers M."/>
            <person name="Hayashi Y."/>
            <person name="Hensch T.K."/>
            <person name="Hirokawa N."/>
            <person name="Hill D."/>
            <person name="Huminiecki L."/>
            <person name="Iacono M."/>
            <person name="Ikeo K."/>
            <person name="Iwama A."/>
            <person name="Ishikawa T."/>
            <person name="Jakt M."/>
            <person name="Kanapin A."/>
            <person name="Katoh M."/>
            <person name="Kawasawa Y."/>
            <person name="Kelso J."/>
            <person name="Kitamura H."/>
            <person name="Kitano H."/>
            <person name="Kollias G."/>
            <person name="Krishnan S.P."/>
            <person name="Kruger A."/>
            <person name="Kummerfeld S.K."/>
            <person name="Kurochkin I.V."/>
            <person name="Lareau L.F."/>
            <person name="Lazarevic D."/>
            <person name="Lipovich L."/>
            <person name="Liu J."/>
            <person name="Liuni S."/>
            <person name="McWilliam S."/>
            <person name="Madan Babu M."/>
            <person name="Madera M."/>
            <person name="Marchionni L."/>
            <person name="Matsuda H."/>
            <person name="Matsuzawa S."/>
            <person name="Miki H."/>
            <person name="Mignone F."/>
            <person name="Miyake S."/>
            <person name="Morris K."/>
            <person name="Mottagui-Tabar S."/>
            <person name="Mulder N."/>
            <person name="Nakano N."/>
            <person name="Nakauchi H."/>
            <person name="Ng P."/>
            <person name="Nilsson R."/>
            <person name="Nishiguchi S."/>
            <person name="Nishikawa S."/>
            <person name="Nori F."/>
            <person name="Ohara O."/>
            <person name="Okazaki Y."/>
            <person name="Orlando V."/>
            <person name="Pang K.C."/>
            <person name="Pavan W.J."/>
            <person name="Pavesi G."/>
            <person name="Pesole G."/>
            <person name="Petrovsky N."/>
            <person name="Piazza S."/>
            <person name="Reed J."/>
            <person name="Reid J.F."/>
            <person name="Ring B.Z."/>
            <person name="Ringwald M."/>
            <person name="Rost B."/>
            <person name="Ruan Y."/>
            <person name="Salzberg S.L."/>
            <person name="Sandelin A."/>
            <person name="Schneider C."/>
            <person name="Schoenbach C."/>
            <person name="Sekiguchi K."/>
            <person name="Semple C.A."/>
            <person name="Seno S."/>
            <person name="Sessa L."/>
            <person name="Sheng Y."/>
            <person name="Shibata Y."/>
            <person name="Shimada H."/>
            <person name="Shimada K."/>
            <person name="Silva D."/>
            <person name="Sinclair B."/>
            <person name="Sperling S."/>
            <person name="Stupka E."/>
            <person name="Sugiura K."/>
            <person name="Sultana R."/>
            <person name="Takenaka Y."/>
            <person name="Taki K."/>
            <person name="Tammoja K."/>
            <person name="Tan S.L."/>
            <person name="Tang S."/>
            <person name="Taylor M.S."/>
            <person name="Tegner J."/>
            <person name="Teichmann S.A."/>
            <person name="Ueda H.R."/>
            <person name="van Nimwegen E."/>
            <person name="Verardo R."/>
            <person name="Wei C.L."/>
            <person name="Yagi K."/>
            <person name="Yamanishi H."/>
            <person name="Zabarovsky E."/>
            <person name="Zhu S."/>
            <person name="Zimmer A."/>
            <person name="Hide W."/>
            <person name="Bult C."/>
            <person name="Grimmond S.M."/>
            <person name="Teasdale R.D."/>
            <person name="Liu E.T."/>
            <person name="Brusic V."/>
            <person name="Quackenbush J."/>
            <person name="Wahlestedt C."/>
            <person name="Mattick J.S."/>
            <person name="Hume D.A."/>
            <person name="Kai C."/>
            <person name="Sasaki D."/>
            <person name="Tomaru Y."/>
            <person name="Fukuda S."/>
            <person name="Kanamori-Katayama M."/>
            <person name="Suzuki M."/>
            <person name="Aoki J."/>
            <person name="Arakawa T."/>
            <person name="Iida J."/>
            <person name="Imamura K."/>
            <person name="Itoh M."/>
            <person name="Kato T."/>
            <person name="Kawaji H."/>
            <person name="Kawagashira N."/>
            <person name="Kawashima T."/>
            <person name="Kojima M."/>
            <person name="Kondo S."/>
            <person name="Konno H."/>
            <person name="Nakano K."/>
            <person name="Ninomiya N."/>
            <person name="Nishio T."/>
            <person name="Okada M."/>
            <person name="Plessy C."/>
            <person name="Shibata K."/>
            <person name="Shiraki T."/>
            <person name="Suzuki S."/>
            <person name="Tagami M."/>
            <person name="Waki K."/>
            <person name="Watahiki A."/>
            <person name="Okamura-Oho Y."/>
            <person name="Suzuki H."/>
            <person name="Kawai J."/>
            <person name="Hayashizaki Y."/>
        </authorList>
    </citation>
    <scope>NUCLEOTIDE SEQUENCE [LARGE SCALE MRNA] (ISOFORM 4)</scope>
    <scope>NUCLEOTIDE SEQUENCE [LARGE SCALE MRNA] OF 1-522 (ISOFORM 3)</scope>
    <source>
        <strain>C57BL/6J</strain>
        <tissue>Bone marrow</tissue>
    </source>
</reference>
<reference key="2">
    <citation type="journal article" date="2004" name="Genome Res.">
        <title>The status, quality, and expansion of the NIH full-length cDNA project: the Mammalian Gene Collection (MGC).</title>
        <authorList>
            <consortium name="The MGC Project Team"/>
        </authorList>
    </citation>
    <scope>NUCLEOTIDE SEQUENCE [LARGE SCALE MRNA] (ISOFORMS 1 AND 2)</scope>
    <source>
        <strain>FVB/N</strain>
        <tissue>Kidney</tissue>
        <tissue>Mammary tumor</tissue>
        <tissue>Salivary gland</tissue>
    </source>
</reference>
<reference key="3">
    <citation type="journal article" date="2007" name="EMBO J.">
        <title>MED25 is distinct from TRAP220/MED1 in cooperating with CBP for retinoid receptor activation.</title>
        <authorList>
            <person name="Lee H.-K."/>
            <person name="Park U.-H."/>
            <person name="Kim E.-J."/>
            <person name="Um S.-J."/>
        </authorList>
    </citation>
    <scope>INTERACTION WITH RARA AND RXRA</scope>
</reference>
<reference key="4">
    <citation type="journal article" date="2014" name="Mol. Cell. Proteomics">
        <title>Immunoaffinity enrichment and mass spectrometry analysis of protein methylation.</title>
        <authorList>
            <person name="Guo A."/>
            <person name="Gu H."/>
            <person name="Zhou J."/>
            <person name="Mulhern D."/>
            <person name="Wang Y."/>
            <person name="Lee K.A."/>
            <person name="Yang V."/>
            <person name="Aguiar M."/>
            <person name="Kornhauser J."/>
            <person name="Jia X."/>
            <person name="Ren J."/>
            <person name="Beausoleil S.A."/>
            <person name="Silva J.C."/>
            <person name="Vemulapalli V."/>
            <person name="Bedford M.T."/>
            <person name="Comb M.J."/>
        </authorList>
    </citation>
    <scope>METHYLATION [LARGE SCALE ANALYSIS] AT ARG-723</scope>
    <scope>IDENTIFICATION BY MASS SPECTROMETRY [LARGE SCALE ANALYSIS]</scope>
    <source>
        <tissue>Embryo</tissue>
    </source>
</reference>
<dbReference type="EMBL" id="AK148368">
    <property type="protein sequence ID" value="BAE28509.1"/>
    <property type="molecule type" value="mRNA"/>
</dbReference>
<dbReference type="EMBL" id="AK149867">
    <property type="protein sequence ID" value="BAE29135.1"/>
    <property type="molecule type" value="mRNA"/>
</dbReference>
<dbReference type="EMBL" id="BC021333">
    <property type="protein sequence ID" value="AAH21333.1"/>
    <property type="molecule type" value="mRNA"/>
</dbReference>
<dbReference type="EMBL" id="BC031138">
    <property type="protein sequence ID" value="AAH31138.1"/>
    <property type="molecule type" value="mRNA"/>
</dbReference>
<dbReference type="EMBL" id="BC071206">
    <property type="protein sequence ID" value="AAH71206.1"/>
    <property type="molecule type" value="mRNA"/>
</dbReference>
<dbReference type="CCDS" id="CCDS21220.1">
    <molecule id="Q8VCB2-1"/>
</dbReference>
<dbReference type="CCDS" id="CCDS85291.1">
    <molecule id="Q8VCB2-2"/>
</dbReference>
<dbReference type="RefSeq" id="NP_001318135.1">
    <property type="nucleotide sequence ID" value="NM_001331206.1"/>
</dbReference>
<dbReference type="RefSeq" id="NP_001318137.1">
    <molecule id="Q8VCB2-2"/>
    <property type="nucleotide sequence ID" value="NM_001331208.2"/>
</dbReference>
<dbReference type="RefSeq" id="NP_083641.1">
    <molecule id="Q8VCB2-1"/>
    <property type="nucleotide sequence ID" value="NM_029365.4"/>
</dbReference>
<dbReference type="RefSeq" id="XP_030098933.1">
    <molecule id="Q8VCB2-2"/>
    <property type="nucleotide sequence ID" value="XM_030243073.2"/>
</dbReference>
<dbReference type="PDB" id="6W1S">
    <property type="method" value="EM"/>
    <property type="resolution" value="4.02 A"/>
    <property type="chains" value="T=15-216"/>
</dbReference>
<dbReference type="PDB" id="8T1I">
    <property type="method" value="EM"/>
    <property type="resolution" value="4.68 A"/>
    <property type="chains" value="T=1-745"/>
</dbReference>
<dbReference type="PDB" id="8T1L">
    <property type="method" value="EM"/>
    <property type="resolution" value="4.83 A"/>
    <property type="chains" value="T=1-745"/>
</dbReference>
<dbReference type="PDBsum" id="6W1S"/>
<dbReference type="PDBsum" id="8T1I"/>
<dbReference type="PDBsum" id="8T1L"/>
<dbReference type="BMRB" id="Q8VCB2"/>
<dbReference type="EMDB" id="EMD-21514"/>
<dbReference type="EMDB" id="EMD-40968"/>
<dbReference type="EMDB" id="EMD-40971"/>
<dbReference type="SMR" id="Q8VCB2"/>
<dbReference type="BioGRID" id="217616">
    <property type="interactions" value="2"/>
</dbReference>
<dbReference type="ComplexPortal" id="CPX-3264">
    <property type="entry name" value="Core mediator complex"/>
</dbReference>
<dbReference type="FunCoup" id="Q8VCB2">
    <property type="interactions" value="2624"/>
</dbReference>
<dbReference type="IntAct" id="Q8VCB2">
    <property type="interactions" value="5"/>
</dbReference>
<dbReference type="MINT" id="Q8VCB2"/>
<dbReference type="STRING" id="10090.ENSMUSP00000003049"/>
<dbReference type="GlyGen" id="Q8VCB2">
    <property type="glycosylation" value="1 site"/>
</dbReference>
<dbReference type="iPTMnet" id="Q8VCB2"/>
<dbReference type="PhosphoSitePlus" id="Q8VCB2"/>
<dbReference type="PaxDb" id="10090-ENSMUSP00000003049"/>
<dbReference type="PeptideAtlas" id="Q8VCB2"/>
<dbReference type="ProteomicsDB" id="295867">
    <molecule id="Q8VCB2-1"/>
</dbReference>
<dbReference type="ProteomicsDB" id="295868">
    <molecule id="Q8VCB2-2"/>
</dbReference>
<dbReference type="ProteomicsDB" id="295869">
    <molecule id="Q8VCB2-3"/>
</dbReference>
<dbReference type="ProteomicsDB" id="295870">
    <molecule id="Q8VCB2-4"/>
</dbReference>
<dbReference type="Pumba" id="Q8VCB2"/>
<dbReference type="Antibodypedia" id="45928">
    <property type="antibodies" value="115 antibodies from 21 providers"/>
</dbReference>
<dbReference type="Ensembl" id="ENSMUST00000003049.8">
    <molecule id="Q8VCB2-1"/>
    <property type="protein sequence ID" value="ENSMUSP00000003049.7"/>
    <property type="gene ID" value="ENSMUSG00000002968.10"/>
</dbReference>
<dbReference type="Ensembl" id="ENSMUST00000207278.2">
    <molecule id="Q8VCB2-2"/>
    <property type="protein sequence ID" value="ENSMUSP00000146595.2"/>
    <property type="gene ID" value="ENSMUSG00000002968.10"/>
</dbReference>
<dbReference type="GeneID" id="75613"/>
<dbReference type="KEGG" id="mmu:75613"/>
<dbReference type="UCSC" id="uc009grm.1">
    <molecule id="Q8VCB2-2"/>
    <property type="organism name" value="mouse"/>
</dbReference>
<dbReference type="UCSC" id="uc009grn.1">
    <molecule id="Q8VCB2-1"/>
    <property type="organism name" value="mouse"/>
</dbReference>
<dbReference type="UCSC" id="uc009grs.1">
    <molecule id="Q8VCB2-3"/>
    <property type="organism name" value="mouse"/>
</dbReference>
<dbReference type="AGR" id="MGI:1922863"/>
<dbReference type="CTD" id="81857"/>
<dbReference type="MGI" id="MGI:1922863">
    <property type="gene designation" value="Med25"/>
</dbReference>
<dbReference type="VEuPathDB" id="HostDB:ENSMUSG00000002968"/>
<dbReference type="eggNOG" id="ENOG502QRN5">
    <property type="taxonomic scope" value="Eukaryota"/>
</dbReference>
<dbReference type="GeneTree" id="ENSGT00940000160439"/>
<dbReference type="HOGENOM" id="CLU_007594_0_0_1"/>
<dbReference type="InParanoid" id="Q8VCB2"/>
<dbReference type="OrthoDB" id="7690434at2759"/>
<dbReference type="PhylomeDB" id="Q8VCB2"/>
<dbReference type="TreeFam" id="TF329598"/>
<dbReference type="BioGRID-ORCS" id="75613">
    <property type="hits" value="15 hits in 78 CRISPR screens"/>
</dbReference>
<dbReference type="ChiTaRS" id="Med25">
    <property type="organism name" value="mouse"/>
</dbReference>
<dbReference type="PRO" id="PR:Q8VCB2"/>
<dbReference type="Proteomes" id="UP000000589">
    <property type="component" value="Chromosome 7"/>
</dbReference>
<dbReference type="RNAct" id="Q8VCB2">
    <property type="molecule type" value="protein"/>
</dbReference>
<dbReference type="Bgee" id="ENSMUSG00000002968">
    <property type="expression patterns" value="Expressed in dorsal pancreas and 258 other cell types or tissues"/>
</dbReference>
<dbReference type="ExpressionAtlas" id="Q8VCB2">
    <property type="expression patterns" value="baseline and differential"/>
</dbReference>
<dbReference type="GO" id="GO:0070847">
    <property type="term" value="C:core mediator complex"/>
    <property type="evidence" value="ECO:0000266"/>
    <property type="project" value="ComplexPortal"/>
</dbReference>
<dbReference type="GO" id="GO:0005654">
    <property type="term" value="C:nucleoplasm"/>
    <property type="evidence" value="ECO:0000304"/>
    <property type="project" value="Reactome"/>
</dbReference>
<dbReference type="GO" id="GO:0005634">
    <property type="term" value="C:nucleus"/>
    <property type="evidence" value="ECO:0000266"/>
    <property type="project" value="ComplexPortal"/>
</dbReference>
<dbReference type="GO" id="GO:0005667">
    <property type="term" value="C:transcription regulator complex"/>
    <property type="evidence" value="ECO:0000353"/>
    <property type="project" value="MGI"/>
</dbReference>
<dbReference type="GO" id="GO:0042974">
    <property type="term" value="F:nuclear retinoic acid receptor binding"/>
    <property type="evidence" value="ECO:0000353"/>
    <property type="project" value="UniProtKB"/>
</dbReference>
<dbReference type="GO" id="GO:0046965">
    <property type="term" value="F:nuclear retinoid X receptor binding"/>
    <property type="evidence" value="ECO:0000353"/>
    <property type="project" value="UniProtKB"/>
</dbReference>
<dbReference type="GO" id="GO:0045944">
    <property type="term" value="P:positive regulation of transcription by RNA polymerase II"/>
    <property type="evidence" value="ECO:0000316"/>
    <property type="project" value="MGI"/>
</dbReference>
<dbReference type="GO" id="GO:0032968">
    <property type="term" value="P:positive regulation of transcription elongation by RNA polymerase II"/>
    <property type="evidence" value="ECO:0000303"/>
    <property type="project" value="ComplexPortal"/>
</dbReference>
<dbReference type="GO" id="GO:0060261">
    <property type="term" value="P:positive regulation of transcription initiation by RNA polymerase II"/>
    <property type="evidence" value="ECO:0000303"/>
    <property type="project" value="ComplexPortal"/>
</dbReference>
<dbReference type="GO" id="GO:0051123">
    <property type="term" value="P:RNA polymerase II preinitiation complex assembly"/>
    <property type="evidence" value="ECO:0000303"/>
    <property type="project" value="ComplexPortal"/>
</dbReference>
<dbReference type="GO" id="GO:0006366">
    <property type="term" value="P:transcription by RNA polymerase II"/>
    <property type="evidence" value="ECO:0000316"/>
    <property type="project" value="MGI"/>
</dbReference>
<dbReference type="FunFam" id="2.40.290.30:FF:000001">
    <property type="entry name" value="Mediator of RNA polymerase II transcription subunit 25"/>
    <property type="match status" value="1"/>
</dbReference>
<dbReference type="Gene3D" id="2.40.290.30">
    <property type="entry name" value="Mediator complex subunit 25, ACID domain"/>
    <property type="match status" value="1"/>
</dbReference>
<dbReference type="InterPro" id="IPR021394">
    <property type="entry name" value="Med25_PTOV"/>
</dbReference>
<dbReference type="InterPro" id="IPR038196">
    <property type="entry name" value="Med25_PTOV_sf"/>
</dbReference>
<dbReference type="InterPro" id="IPR021397">
    <property type="entry name" value="Mediator_Med25_SD1"/>
</dbReference>
<dbReference type="InterPro" id="IPR021419">
    <property type="entry name" value="Mediator_Med25_VWA"/>
</dbReference>
<dbReference type="InterPro" id="IPR036465">
    <property type="entry name" value="vWFA_dom_sf"/>
</dbReference>
<dbReference type="PANTHER" id="PTHR12433">
    <property type="entry name" value="MEDIATOR OF RNA POLYMERASE II TRANSCRIPTION SUBUNIT 25"/>
    <property type="match status" value="1"/>
</dbReference>
<dbReference type="PANTHER" id="PTHR12433:SF10">
    <property type="entry name" value="MEDIATOR OF RNA POLYMERASE II TRANSCRIPTION SUBUNIT 25"/>
    <property type="match status" value="1"/>
</dbReference>
<dbReference type="Pfam" id="PF11232">
    <property type="entry name" value="Med25"/>
    <property type="match status" value="1"/>
</dbReference>
<dbReference type="Pfam" id="PF11235">
    <property type="entry name" value="Med25_SD1"/>
    <property type="match status" value="1"/>
</dbReference>
<dbReference type="Pfam" id="PF11265">
    <property type="entry name" value="Med25_VWA"/>
    <property type="match status" value="1"/>
</dbReference>
<dbReference type="SUPFAM" id="SSF53300">
    <property type="entry name" value="vWA-like"/>
    <property type="match status" value="1"/>
</dbReference>
<organism>
    <name type="scientific">Mus musculus</name>
    <name type="common">Mouse</name>
    <dbReference type="NCBI Taxonomy" id="10090"/>
    <lineage>
        <taxon>Eukaryota</taxon>
        <taxon>Metazoa</taxon>
        <taxon>Chordata</taxon>
        <taxon>Craniata</taxon>
        <taxon>Vertebrata</taxon>
        <taxon>Euteleostomi</taxon>
        <taxon>Mammalia</taxon>
        <taxon>Eutheria</taxon>
        <taxon>Euarchontoglires</taxon>
        <taxon>Glires</taxon>
        <taxon>Rodentia</taxon>
        <taxon>Myomorpha</taxon>
        <taxon>Muroidea</taxon>
        <taxon>Muridae</taxon>
        <taxon>Murinae</taxon>
        <taxon>Mus</taxon>
        <taxon>Mus</taxon>
    </lineage>
</organism>
<evidence type="ECO:0000250" key="1"/>
<evidence type="ECO:0000256" key="2">
    <source>
        <dbReference type="SAM" id="MobiDB-lite"/>
    </source>
</evidence>
<evidence type="ECO:0000269" key="3">
    <source>
    </source>
</evidence>
<evidence type="ECO:0000303" key="4">
    <source>
    </source>
</evidence>
<evidence type="ECO:0000303" key="5">
    <source>
    </source>
</evidence>
<evidence type="ECO:0000305" key="6"/>
<evidence type="ECO:0007744" key="7">
    <source>
    </source>
</evidence>
<accession>Q8VCB2</accession>
<accession>Q3UDX6</accession>
<accession>Q3UFQ1</accession>
<accession>Q6IR27</accession>
<protein>
    <recommendedName>
        <fullName>Mediator of RNA polymerase II transcription subunit 25</fullName>
    </recommendedName>
    <alternativeName>
        <fullName>Mediator complex subunit 25</fullName>
        <shortName>mMED25</shortName>
    </alternativeName>
</protein>
<name>MED25_MOUSE</name>
<comment type="function">
    <text evidence="1">Component of the Mediator complex, a coactivator involved in the regulated transcription of nearly all RNA polymerase II-dependent genes. Mediator functions as a bridge to convey information from gene-specific regulatory proteins to the basal RNA polymerase II transcription machinery. Mediator is recruited to promoters by direct interactions with regulatory proteins and serves as a scaffold for the assembly of a functional preinitiation complex with RNA polymerase II and the general transcription factors. Required for RARA/RXRA-mediated transcription (By similarity).</text>
</comment>
<comment type="subunit">
    <text evidence="1 3">Component of the Mediator complex, which is composed of MED1, MED4, MED6, MED7, MED8, MED9, MED10, MED11, MED12, MED13, MED13L, MED14, MED15, MED16, MED17, MED18, MED19, MED20, MED21, MED22, MED23, MED24, MED25, MED26, MED27, MED29, MED30, MED31, CCNC, CDK8 and CDC2L6/CDK11. The MED12, MED13, CCNC and CDK8 subunits form a distinct module termed the CDK8 module. Mediator containing the CDK8 module is less active than Mediator lacking this module in supporting transcriptional activation. Individual preparations of the Mediator complex lacking one or more distinct subunits have been variously termed ARC, CRSP, DRIP, PC2, SMCC and TRAP. Interacts with CREBBP. Interacts with ESR1, GR and THRB in a ligand-dependent fashion. Binds the Herpes simplex virus activator VP16 (By similarity). Interacts with RARA and RXRA in a ligand-dependent fashion.</text>
</comment>
<comment type="subcellular location">
    <subcellularLocation>
        <location evidence="1">Nucleus</location>
    </subcellularLocation>
</comment>
<comment type="alternative products">
    <event type="alternative splicing"/>
    <isoform>
        <id>Q8VCB2-1</id>
        <name>1</name>
        <sequence type="displayed"/>
    </isoform>
    <isoform>
        <id>Q8VCB2-2</id>
        <name>2</name>
        <sequence type="described" ref="VSP_028147 VSP_028150"/>
    </isoform>
    <isoform>
        <id>Q8VCB2-3</id>
        <name>3</name>
        <sequence type="described" ref="VSP_028148"/>
    </isoform>
    <isoform>
        <id>Q8VCB2-4</id>
        <name>4</name>
        <sequence type="described" ref="VSP_028149"/>
    </isoform>
</comment>
<comment type="similarity">
    <text evidence="6">Belongs to the Mediator complex subunit 25 family.</text>
</comment>
<gene>
    <name type="primary">Med25</name>
</gene>
<keyword id="KW-0002">3D-structure</keyword>
<keyword id="KW-0010">Activator</keyword>
<keyword id="KW-0025">Alternative splicing</keyword>
<keyword id="KW-0488">Methylation</keyword>
<keyword id="KW-0539">Nucleus</keyword>
<keyword id="KW-1185">Reference proteome</keyword>
<keyword id="KW-0804">Transcription</keyword>
<keyword id="KW-0805">Transcription regulation</keyword>